<feature type="chain" id="PRO_0000247876" description="tRNA-guanine(15) transglycosylase">
    <location>
        <begin position="1"/>
        <end position="674"/>
    </location>
</feature>
<feature type="domain" description="PUA" evidence="1">
    <location>
        <begin position="596"/>
        <end position="671"/>
    </location>
</feature>
<feature type="active site" description="Nucleophile" evidence="1">
    <location>
        <position position="90"/>
    </location>
</feature>
<feature type="binding site" evidence="1">
    <location>
        <position position="125"/>
    </location>
    <ligand>
        <name>substrate</name>
    </ligand>
</feature>
<feature type="binding site" evidence="1">
    <location>
        <position position="192"/>
    </location>
    <ligand>
        <name>substrate</name>
    </ligand>
</feature>
<feature type="binding site" evidence="1">
    <location>
        <position position="275"/>
    </location>
    <ligand>
        <name>Zn(2+)</name>
        <dbReference type="ChEBI" id="CHEBI:29105"/>
    </ligand>
</feature>
<feature type="binding site" evidence="1">
    <location>
        <position position="277"/>
    </location>
    <ligand>
        <name>Zn(2+)</name>
        <dbReference type="ChEBI" id="CHEBI:29105"/>
    </ligand>
</feature>
<feature type="binding site" evidence="1">
    <location>
        <position position="280"/>
    </location>
    <ligand>
        <name>Zn(2+)</name>
        <dbReference type="ChEBI" id="CHEBI:29105"/>
    </ligand>
</feature>
<proteinExistence type="inferred from homology"/>
<accession>Q2NGY4</accession>
<protein>
    <recommendedName>
        <fullName evidence="1">tRNA-guanine(15) transglycosylase</fullName>
        <ecNumber evidence="1">2.4.2.48</ecNumber>
    </recommendedName>
    <alternativeName>
        <fullName evidence="1">7-cyano-7-deazaguanine tRNA-ribosyltransferase</fullName>
    </alternativeName>
    <alternativeName>
        <fullName evidence="1">Archaeal tRNA-guanine transglycosylase</fullName>
    </alternativeName>
</protein>
<dbReference type="EC" id="2.4.2.48" evidence="1"/>
<dbReference type="EMBL" id="CP000102">
    <property type="protein sequence ID" value="ABC56919.1"/>
    <property type="molecule type" value="Genomic_DNA"/>
</dbReference>
<dbReference type="RefSeq" id="WP_011406119.1">
    <property type="nucleotide sequence ID" value="NC_007681.1"/>
</dbReference>
<dbReference type="SMR" id="Q2NGY4"/>
<dbReference type="STRING" id="339860.Msp_0520"/>
<dbReference type="GeneID" id="41325094"/>
<dbReference type="KEGG" id="mst:Msp_0520"/>
<dbReference type="eggNOG" id="arCOG00989">
    <property type="taxonomic scope" value="Archaea"/>
</dbReference>
<dbReference type="eggNOG" id="arCOG00991">
    <property type="taxonomic scope" value="Archaea"/>
</dbReference>
<dbReference type="HOGENOM" id="CLU_030083_0_0_2"/>
<dbReference type="OrthoDB" id="6871at2157"/>
<dbReference type="UniPathway" id="UPA00393"/>
<dbReference type="Proteomes" id="UP000001931">
    <property type="component" value="Chromosome"/>
</dbReference>
<dbReference type="GO" id="GO:0005737">
    <property type="term" value="C:cytoplasm"/>
    <property type="evidence" value="ECO:0007669"/>
    <property type="project" value="TreeGrafter"/>
</dbReference>
<dbReference type="GO" id="GO:0016763">
    <property type="term" value="F:pentosyltransferase activity"/>
    <property type="evidence" value="ECO:0007669"/>
    <property type="project" value="UniProtKB-UniRule"/>
</dbReference>
<dbReference type="GO" id="GO:0003723">
    <property type="term" value="F:RNA binding"/>
    <property type="evidence" value="ECO:0007669"/>
    <property type="project" value="InterPro"/>
</dbReference>
<dbReference type="GO" id="GO:0008270">
    <property type="term" value="F:zinc ion binding"/>
    <property type="evidence" value="ECO:0007669"/>
    <property type="project" value="UniProtKB-UniRule"/>
</dbReference>
<dbReference type="GO" id="GO:0002099">
    <property type="term" value="P:tRNA wobble guanine modification"/>
    <property type="evidence" value="ECO:0007669"/>
    <property type="project" value="TreeGrafter"/>
</dbReference>
<dbReference type="CDD" id="cd21149">
    <property type="entry name" value="PUA_archaeosine_TGT"/>
    <property type="match status" value="1"/>
</dbReference>
<dbReference type="Gene3D" id="3.10.450.90">
    <property type="entry name" value="ArcTGT, C2 domain"/>
    <property type="match status" value="1"/>
</dbReference>
<dbReference type="Gene3D" id="2.30.130.10">
    <property type="entry name" value="PUA domain"/>
    <property type="match status" value="1"/>
</dbReference>
<dbReference type="Gene3D" id="3.20.20.105">
    <property type="entry name" value="Queuine tRNA-ribosyltransferase-like"/>
    <property type="match status" value="1"/>
</dbReference>
<dbReference type="Gene3D" id="3.40.50.10630">
    <property type="entry name" value="Uracil-DNA glycosylase-like"/>
    <property type="match status" value="1"/>
</dbReference>
<dbReference type="HAMAP" id="MF_01634">
    <property type="entry name" value="TgtA_arch"/>
    <property type="match status" value="1"/>
</dbReference>
<dbReference type="InterPro" id="IPR050076">
    <property type="entry name" value="ArchSynthase1/Queuine_TRR"/>
</dbReference>
<dbReference type="InterPro" id="IPR002478">
    <property type="entry name" value="PUA"/>
</dbReference>
<dbReference type="InterPro" id="IPR015947">
    <property type="entry name" value="PUA-like_sf"/>
</dbReference>
<dbReference type="InterPro" id="IPR036974">
    <property type="entry name" value="PUA_sf"/>
</dbReference>
<dbReference type="InterPro" id="IPR036511">
    <property type="entry name" value="TGT-like_sf"/>
</dbReference>
<dbReference type="InterPro" id="IPR029402">
    <property type="entry name" value="TGT_C2"/>
</dbReference>
<dbReference type="InterPro" id="IPR038250">
    <property type="entry name" value="TGT_C2_sf"/>
</dbReference>
<dbReference type="InterPro" id="IPR004804">
    <property type="entry name" value="TgtA"/>
</dbReference>
<dbReference type="InterPro" id="IPR002616">
    <property type="entry name" value="tRNA_ribo_trans-like"/>
</dbReference>
<dbReference type="InterPro" id="IPR004521">
    <property type="entry name" value="Uncharacterised_CHP00451"/>
</dbReference>
<dbReference type="NCBIfam" id="TIGR00432">
    <property type="entry name" value="arcsn_tRNA_tgt"/>
    <property type="match status" value="1"/>
</dbReference>
<dbReference type="NCBIfam" id="TIGR00449">
    <property type="entry name" value="tgt_general"/>
    <property type="match status" value="1"/>
</dbReference>
<dbReference type="NCBIfam" id="TIGR00451">
    <property type="entry name" value="unchar_dom_2"/>
    <property type="match status" value="1"/>
</dbReference>
<dbReference type="PANTHER" id="PTHR46499">
    <property type="entry name" value="QUEUINE TRNA-RIBOSYLTRANSFERASE"/>
    <property type="match status" value="1"/>
</dbReference>
<dbReference type="PANTHER" id="PTHR46499:SF1">
    <property type="entry name" value="QUEUINE TRNA-RIBOSYLTRANSFERASE"/>
    <property type="match status" value="1"/>
</dbReference>
<dbReference type="Pfam" id="PF01472">
    <property type="entry name" value="PUA"/>
    <property type="match status" value="1"/>
</dbReference>
<dbReference type="Pfam" id="PF01702">
    <property type="entry name" value="TGT"/>
    <property type="match status" value="1"/>
</dbReference>
<dbReference type="Pfam" id="PF14810">
    <property type="entry name" value="TGT_C2"/>
    <property type="match status" value="1"/>
</dbReference>
<dbReference type="SMART" id="SM00359">
    <property type="entry name" value="PUA"/>
    <property type="match status" value="1"/>
</dbReference>
<dbReference type="SUPFAM" id="SSF88802">
    <property type="entry name" value="Pre-PUA domain"/>
    <property type="match status" value="1"/>
</dbReference>
<dbReference type="SUPFAM" id="SSF88697">
    <property type="entry name" value="PUA domain-like"/>
    <property type="match status" value="1"/>
</dbReference>
<dbReference type="SUPFAM" id="SSF51713">
    <property type="entry name" value="tRNA-guanine transglycosylase"/>
    <property type="match status" value="1"/>
</dbReference>
<dbReference type="PROSITE" id="PS50890">
    <property type="entry name" value="PUA"/>
    <property type="match status" value="1"/>
</dbReference>
<keyword id="KW-0328">Glycosyltransferase</keyword>
<keyword id="KW-0479">Metal-binding</keyword>
<keyword id="KW-1185">Reference proteome</keyword>
<keyword id="KW-0808">Transferase</keyword>
<keyword id="KW-0819">tRNA processing</keyword>
<keyword id="KW-0862">Zinc</keyword>
<organism>
    <name type="scientific">Methanosphaera stadtmanae (strain ATCC 43021 / DSM 3091 / JCM 11832 / MCB-3)</name>
    <dbReference type="NCBI Taxonomy" id="339860"/>
    <lineage>
        <taxon>Archaea</taxon>
        <taxon>Methanobacteriati</taxon>
        <taxon>Methanobacteriota</taxon>
        <taxon>Methanomada group</taxon>
        <taxon>Methanobacteria</taxon>
        <taxon>Methanobacteriales</taxon>
        <taxon>Methanobacteriaceae</taxon>
        <taxon>Methanosphaera</taxon>
    </lineage>
</organism>
<reference key="1">
    <citation type="journal article" date="2006" name="J. Bacteriol.">
        <title>The genome sequence of Methanosphaera stadtmanae reveals why this human intestinal archaeon is restricted to methanol and H2 for methane formation and ATP synthesis.</title>
        <authorList>
            <person name="Fricke W.F."/>
            <person name="Seedorf H."/>
            <person name="Henne A."/>
            <person name="Kruer M."/>
            <person name="Liesegang H."/>
            <person name="Hedderich R."/>
            <person name="Gottschalk G."/>
            <person name="Thauer R.K."/>
        </authorList>
    </citation>
    <scope>NUCLEOTIDE SEQUENCE [LARGE SCALE GENOMIC DNA]</scope>
    <source>
        <strain>ATCC 43021 / DSM 3091 / JCM 11832 / MCB-3</strain>
    </source>
</reference>
<gene>
    <name evidence="1" type="primary">tgtA</name>
    <name type="ordered locus">Msp_0520</name>
</gene>
<sequence>MVDIIVDFEIKYKDAMARVGKFKTPHGTVTTPALMPVVHPGKQTLDVKKLGAQIVITNSYIIYKNEELKKKALEEGVHSLIDFPNTIETDSGSFQLSVYGDIDITNEEVIKFQEAIKTDIGTSLDIPTAPYVKREEAENDLEITIERAKEAANVKSDLLLNSVVQGSTFPDLREKCAKEISKYDADIYPIGAVVPLMEMYRYADLVDAVMYSMRGLPENKPRHLMGAGHPMVFALATAMGCDLFDSAAYILYANKDRFMMPDGTLRLEDLIEMPCSCRVCCEYTVDELKQMDQKKRAKLIAEHNLHISFAEIRRIRQAIVDGELMKLVELRCRSHPFLLDGLRRLMEYKEDMERLNPSSKKSAFFYTGYESLARSEVPKHLKQLENIKPKNKNLVILPHTRKPYTKYVNREYIKKYTPKIPTYYSNTTNTDYSNSDVVVADIPFGIIPLGLDEFYPLAQNESPSIHDLDSKRFIRDIINNYSKKYDNVLIHRKVIEKFDITNFNLIEDELQLPEAKISDFNRLNDIADYQFGCGAGNALFGGDEDKITIEKSRKTKKIRHVFEDNENIVNMRANDGFLILSDLGAKRLHKFLEYPHNRVVVSEDSEPFALKGKSVFNKFVLDCDENIRRNDEVLIVNKDDKLLAFGKALLSSYEIKDFNTGQAIKTRKWKKEIE</sequence>
<name>ATGT_METST</name>
<comment type="function">
    <text evidence="1">Exchanges the guanine residue with 7-cyano-7-deazaguanine (preQ0) at position 15 in the dihydrouridine loop (D-loop) of archaeal tRNAs.</text>
</comment>
<comment type="catalytic activity">
    <reaction evidence="1">
        <text>guanosine(15) in tRNA + 7-cyano-7-deazaguanine = 7-cyano-7-carbaguanosine(15) in tRNA + guanine</text>
        <dbReference type="Rhea" id="RHEA:43164"/>
        <dbReference type="Rhea" id="RHEA-COMP:10371"/>
        <dbReference type="Rhea" id="RHEA-COMP:10372"/>
        <dbReference type="ChEBI" id="CHEBI:16235"/>
        <dbReference type="ChEBI" id="CHEBI:45075"/>
        <dbReference type="ChEBI" id="CHEBI:74269"/>
        <dbReference type="ChEBI" id="CHEBI:82850"/>
        <dbReference type="EC" id="2.4.2.48"/>
    </reaction>
</comment>
<comment type="cofactor">
    <cofactor evidence="1">
        <name>Zn(2+)</name>
        <dbReference type="ChEBI" id="CHEBI:29105"/>
    </cofactor>
    <text evidence="1">Binds 1 zinc ion per subunit.</text>
</comment>
<comment type="pathway">
    <text evidence="1">tRNA modification; archaeosine-tRNA biosynthesis.</text>
</comment>
<comment type="similarity">
    <text evidence="1">Belongs to the archaeosine tRNA-ribosyltransferase family.</text>
</comment>
<evidence type="ECO:0000255" key="1">
    <source>
        <dbReference type="HAMAP-Rule" id="MF_01634"/>
    </source>
</evidence>